<reference key="1">
    <citation type="journal article" date="2005" name="Nucleic Acids Res.">
        <title>Genome dynamics and diversity of Shigella species, the etiologic agents of bacillary dysentery.</title>
        <authorList>
            <person name="Yang F."/>
            <person name="Yang J."/>
            <person name="Zhang X."/>
            <person name="Chen L."/>
            <person name="Jiang Y."/>
            <person name="Yan Y."/>
            <person name="Tang X."/>
            <person name="Wang J."/>
            <person name="Xiong Z."/>
            <person name="Dong J."/>
            <person name="Xue Y."/>
            <person name="Zhu Y."/>
            <person name="Xu X."/>
            <person name="Sun L."/>
            <person name="Chen S."/>
            <person name="Nie H."/>
            <person name="Peng J."/>
            <person name="Xu J."/>
            <person name="Wang Y."/>
            <person name="Yuan Z."/>
            <person name="Wen Y."/>
            <person name="Yao Z."/>
            <person name="Shen Y."/>
            <person name="Qiang B."/>
            <person name="Hou Y."/>
            <person name="Yu J."/>
            <person name="Jin Q."/>
        </authorList>
    </citation>
    <scope>NUCLEOTIDE SEQUENCE [LARGE SCALE GENOMIC DNA]</scope>
    <source>
        <strain>Ss046</strain>
    </source>
</reference>
<protein>
    <recommendedName>
        <fullName evidence="1">Mannosyl-3-phosphoglycerate phosphatase</fullName>
        <shortName evidence="1">MPGP</shortName>
        <ecNumber evidence="1">3.1.3.70</ecNumber>
    </recommendedName>
</protein>
<dbReference type="EC" id="3.1.3.70" evidence="1"/>
<dbReference type="EMBL" id="CP000038">
    <property type="protein sequence ID" value="AAZ88678.1"/>
    <property type="molecule type" value="Genomic_DNA"/>
</dbReference>
<dbReference type="RefSeq" id="WP_000491524.1">
    <property type="nucleotide sequence ID" value="NC_007384.1"/>
</dbReference>
<dbReference type="SMR" id="Q3Z0N4"/>
<dbReference type="KEGG" id="ssn:SSON_2012"/>
<dbReference type="HOGENOM" id="CLU_063016_1_0_6"/>
<dbReference type="Proteomes" id="UP000002529">
    <property type="component" value="Chromosome"/>
</dbReference>
<dbReference type="GO" id="GO:0005829">
    <property type="term" value="C:cytosol"/>
    <property type="evidence" value="ECO:0007669"/>
    <property type="project" value="TreeGrafter"/>
</dbReference>
<dbReference type="GO" id="GO:0000287">
    <property type="term" value="F:magnesium ion binding"/>
    <property type="evidence" value="ECO:0007669"/>
    <property type="project" value="UniProtKB-ARBA"/>
</dbReference>
<dbReference type="GO" id="GO:0050531">
    <property type="term" value="F:mannosyl-3-phosphoglycerate phosphatase activity"/>
    <property type="evidence" value="ECO:0007669"/>
    <property type="project" value="UniProtKB-UniRule"/>
</dbReference>
<dbReference type="GO" id="GO:0051479">
    <property type="term" value="P:mannosylglycerate biosynthetic process"/>
    <property type="evidence" value="ECO:0007669"/>
    <property type="project" value="InterPro"/>
</dbReference>
<dbReference type="CDD" id="cd07507">
    <property type="entry name" value="HAD_Pase"/>
    <property type="match status" value="1"/>
</dbReference>
<dbReference type="Gene3D" id="3.40.50.1000">
    <property type="entry name" value="HAD superfamily/HAD-like"/>
    <property type="match status" value="1"/>
</dbReference>
<dbReference type="Gene3D" id="3.30.980.20">
    <property type="entry name" value="Putative mannosyl-3-phosphoglycerate phosphatase, domain 2"/>
    <property type="match status" value="1"/>
</dbReference>
<dbReference type="HAMAP" id="MF_00617">
    <property type="entry name" value="MPGP_rel"/>
    <property type="match status" value="1"/>
</dbReference>
<dbReference type="InterPro" id="IPR036412">
    <property type="entry name" value="HAD-like_sf"/>
</dbReference>
<dbReference type="InterPro" id="IPR006381">
    <property type="entry name" value="HAD-SF-IIB-MPGP"/>
</dbReference>
<dbReference type="InterPro" id="IPR006379">
    <property type="entry name" value="HAD-SF_hydro_IIB"/>
</dbReference>
<dbReference type="InterPro" id="IPR023214">
    <property type="entry name" value="HAD_sf"/>
</dbReference>
<dbReference type="InterPro" id="IPR012815">
    <property type="entry name" value="MPG_Pase"/>
</dbReference>
<dbReference type="NCBIfam" id="TIGR01484">
    <property type="entry name" value="HAD-SF-IIB"/>
    <property type="match status" value="1"/>
</dbReference>
<dbReference type="NCBIfam" id="TIGR01486">
    <property type="entry name" value="HAD-SF-IIB-MPGP"/>
    <property type="match status" value="1"/>
</dbReference>
<dbReference type="NCBIfam" id="TIGR02463">
    <property type="entry name" value="MPGP_rel"/>
    <property type="match status" value="1"/>
</dbReference>
<dbReference type="NCBIfam" id="NF002976">
    <property type="entry name" value="PRK03669.1"/>
    <property type="match status" value="1"/>
</dbReference>
<dbReference type="PANTHER" id="PTHR10000:SF8">
    <property type="entry name" value="HAD SUPERFAMILY HYDROLASE-LIKE, TYPE 3"/>
    <property type="match status" value="1"/>
</dbReference>
<dbReference type="PANTHER" id="PTHR10000">
    <property type="entry name" value="PHOSPHOSERINE PHOSPHATASE"/>
    <property type="match status" value="1"/>
</dbReference>
<dbReference type="Pfam" id="PF08282">
    <property type="entry name" value="Hydrolase_3"/>
    <property type="match status" value="1"/>
</dbReference>
<dbReference type="SFLD" id="SFLDG01142">
    <property type="entry name" value="C2.B.2:_Mannosyl-3-phosphoglyc"/>
    <property type="match status" value="1"/>
</dbReference>
<dbReference type="SFLD" id="SFLDG01140">
    <property type="entry name" value="C2.B:_Phosphomannomutase_and_P"/>
    <property type="match status" value="1"/>
</dbReference>
<dbReference type="SUPFAM" id="SSF56784">
    <property type="entry name" value="HAD-like"/>
    <property type="match status" value="1"/>
</dbReference>
<keyword id="KW-0963">Cytoplasm</keyword>
<keyword id="KW-0378">Hydrolase</keyword>
<keyword id="KW-0460">Magnesium</keyword>
<keyword id="KW-0479">Metal-binding</keyword>
<keyword id="KW-1185">Reference proteome</keyword>
<proteinExistence type="inferred from homology"/>
<feature type="chain" id="PRO_0000273963" description="Mannosyl-3-phosphoglycerate phosphatase">
    <location>
        <begin position="1"/>
        <end position="271"/>
    </location>
</feature>
<feature type="active site" description="Nucleophile" evidence="1">
    <location>
        <position position="13"/>
    </location>
</feature>
<feature type="binding site" evidence="1">
    <location>
        <position position="13"/>
    </location>
    <ligand>
        <name>Mg(2+)</name>
        <dbReference type="ChEBI" id="CHEBI:18420"/>
    </ligand>
</feature>
<feature type="binding site" evidence="1">
    <location>
        <position position="15"/>
    </location>
    <ligand>
        <name>Mg(2+)</name>
        <dbReference type="ChEBI" id="CHEBI:18420"/>
    </ligand>
</feature>
<feature type="binding site" evidence="1">
    <location>
        <position position="214"/>
    </location>
    <ligand>
        <name>Mg(2+)</name>
        <dbReference type="ChEBI" id="CHEBI:18420"/>
    </ligand>
</feature>
<organism>
    <name type="scientific">Shigella sonnei (strain Ss046)</name>
    <dbReference type="NCBI Taxonomy" id="300269"/>
    <lineage>
        <taxon>Bacteria</taxon>
        <taxon>Pseudomonadati</taxon>
        <taxon>Pseudomonadota</taxon>
        <taxon>Gammaproteobacteria</taxon>
        <taxon>Enterobacterales</taxon>
        <taxon>Enterobacteriaceae</taxon>
        <taxon>Shigella</taxon>
    </lineage>
</organism>
<evidence type="ECO:0000255" key="1">
    <source>
        <dbReference type="HAMAP-Rule" id="MF_00617"/>
    </source>
</evidence>
<gene>
    <name type="primary">yedP</name>
    <name type="ordered locus">SSON_2012</name>
</gene>
<accession>Q3Z0N4</accession>
<comment type="catalytic activity">
    <reaction evidence="1">
        <text>2-O-(alpha-D-mannosyl)-3-phosphoglycerate + H2O = (2R)-2-O-(alpha-D-mannosyl)-glycerate + phosphate</text>
        <dbReference type="Rhea" id="RHEA:19309"/>
        <dbReference type="ChEBI" id="CHEBI:15377"/>
        <dbReference type="ChEBI" id="CHEBI:43474"/>
        <dbReference type="ChEBI" id="CHEBI:57541"/>
        <dbReference type="ChEBI" id="CHEBI:57744"/>
        <dbReference type="EC" id="3.1.3.70"/>
    </reaction>
</comment>
<comment type="cofactor">
    <cofactor evidence="1">
        <name>Mg(2+)</name>
        <dbReference type="ChEBI" id="CHEBI:18420"/>
    </cofactor>
</comment>
<comment type="subcellular location">
    <subcellularLocation>
        <location evidence="1">Cytoplasm</location>
    </subcellularLocation>
</comment>
<comment type="similarity">
    <text evidence="1">Belongs to the HAD-like hydrolase superfamily. MPGP family.</text>
</comment>
<sequence length="271" mass="30502">MFSIQQPLLVFSDLDGTLLDSHSYDWQPTALWLSRLREANVPVILCSSKTSAEMLYLQKTLGLQGLPLIAENGAVIQLAEQWQDIDGFPRIISGISHGEISQVLNTLREKEHFKFTTFDDVDDATIAEWTGLSRSQAALTQLHEASVTLIWRDSDERMAQFTARLNELGLQFMQGARFWHVLDASAGKDQAANWIIATYQQLSGKRPTTLGLGDGPNDAPLLEVMDYAVIVKGLNREGVHLHDEDPTRVWRTQREGPEGWREGLDHFFSAR</sequence>
<name>MPGP_SHISS</name>